<reference key="1">
    <citation type="submission" date="2004-07" db="EMBL/GenBank/DDBJ databases">
        <authorList>
            <consortium name="NIH - Xenopus Gene Collection (XGC) project"/>
        </authorList>
    </citation>
    <scope>NUCLEOTIDE SEQUENCE [LARGE SCALE MRNA]</scope>
    <source>
        <tissue>Kidney</tissue>
    </source>
</reference>
<comment type="function">
    <text evidence="1">Acts as an activator of hypoxia-induced mitophagy, an important mechanism for mitochondrial quality control.</text>
</comment>
<comment type="subcellular location">
    <subcellularLocation>
        <location evidence="1">Mitochondrion outer membrane</location>
        <topology evidence="1">Multi-pass membrane protein</topology>
    </subcellularLocation>
</comment>
<comment type="similarity">
    <text evidence="3">Belongs to the FUN14 family.</text>
</comment>
<gene>
    <name type="primary">fundc1-b</name>
</gene>
<evidence type="ECO:0000250" key="1"/>
<evidence type="ECO:0000255" key="2"/>
<evidence type="ECO:0000305" key="3"/>
<organism>
    <name type="scientific">Xenopus laevis</name>
    <name type="common">African clawed frog</name>
    <dbReference type="NCBI Taxonomy" id="8355"/>
    <lineage>
        <taxon>Eukaryota</taxon>
        <taxon>Metazoa</taxon>
        <taxon>Chordata</taxon>
        <taxon>Craniata</taxon>
        <taxon>Vertebrata</taxon>
        <taxon>Euteleostomi</taxon>
        <taxon>Amphibia</taxon>
        <taxon>Batrachia</taxon>
        <taxon>Anura</taxon>
        <taxon>Pipoidea</taxon>
        <taxon>Pipidae</taxon>
        <taxon>Xenopodinae</taxon>
        <taxon>Xenopus</taxon>
        <taxon>Xenopus</taxon>
    </lineage>
</organism>
<name>FUD1B_XENLA</name>
<dbReference type="EMBL" id="BC076744">
    <property type="protein sequence ID" value="AAH76744.1"/>
    <property type="molecule type" value="mRNA"/>
</dbReference>
<dbReference type="RefSeq" id="NP_001086519.1">
    <property type="nucleotide sequence ID" value="NM_001093050.1"/>
</dbReference>
<dbReference type="DNASU" id="446354"/>
<dbReference type="GeneID" id="446354"/>
<dbReference type="KEGG" id="xla:446354"/>
<dbReference type="AGR" id="Xenbase:XB-GENE-17342249"/>
<dbReference type="CTD" id="446354"/>
<dbReference type="OrthoDB" id="163794at2759"/>
<dbReference type="Proteomes" id="UP000186698">
    <property type="component" value="Chromosome 2L"/>
</dbReference>
<dbReference type="Bgee" id="446354">
    <property type="expression patterns" value="Expressed in muscle tissue and 19 other cell types or tissues"/>
</dbReference>
<dbReference type="GO" id="GO:0005741">
    <property type="term" value="C:mitochondrial outer membrane"/>
    <property type="evidence" value="ECO:0000250"/>
    <property type="project" value="UniProtKB"/>
</dbReference>
<dbReference type="GO" id="GO:0000422">
    <property type="term" value="P:autophagy of mitochondrion"/>
    <property type="evidence" value="ECO:0000250"/>
    <property type="project" value="UniProtKB"/>
</dbReference>
<dbReference type="GO" id="GO:0001666">
    <property type="term" value="P:response to hypoxia"/>
    <property type="evidence" value="ECO:0000250"/>
    <property type="project" value="UniProtKB"/>
</dbReference>
<dbReference type="InterPro" id="IPR007014">
    <property type="entry name" value="FUN14"/>
</dbReference>
<dbReference type="PANTHER" id="PTHR21346">
    <property type="entry name" value="FUN14 DOMAIN CONTAINING"/>
    <property type="match status" value="1"/>
</dbReference>
<dbReference type="PANTHER" id="PTHR21346:SF2">
    <property type="entry name" value="FUN14 DOMAIN-CONTAINING PROTEIN 1"/>
    <property type="match status" value="1"/>
</dbReference>
<dbReference type="Pfam" id="PF04930">
    <property type="entry name" value="FUN14"/>
    <property type="match status" value="1"/>
</dbReference>
<accession>Q6DFJ3</accession>
<sequence length="188" mass="21035">MSKKSTNIFTCSGAQHKWIQVVNIDGNIFSIYVCFFVCFFFYLEPSSDDESYEVLDLTEYARRHHWWNRLFGRNSGPLTEKYSVATQIVIGGVSGWCAGFLFQKVGKLAATAVGGGFLLLQIASHGGYIQIDWKRVEKDVNKAKRKIKKEANKTPEINTVIEKSTDFFKKNIVVSGGFVGGFLIGLAS</sequence>
<keyword id="KW-0072">Autophagy</keyword>
<keyword id="KW-0472">Membrane</keyword>
<keyword id="KW-0496">Mitochondrion</keyword>
<keyword id="KW-1000">Mitochondrion outer membrane</keyword>
<keyword id="KW-1185">Reference proteome</keyword>
<keyword id="KW-0812">Transmembrane</keyword>
<keyword id="KW-1133">Transmembrane helix</keyword>
<protein>
    <recommendedName>
        <fullName>FUN14 domain-containing protein 1B</fullName>
    </recommendedName>
</protein>
<feature type="chain" id="PRO_0000416277" description="FUN14 domain-containing protein 1B">
    <location>
        <begin position="1"/>
        <end position="188"/>
    </location>
</feature>
<feature type="transmembrane region" description="Helical" evidence="2">
    <location>
        <begin position="21"/>
        <end position="41"/>
    </location>
</feature>
<feature type="transmembrane region" description="Helical" evidence="2">
    <location>
        <begin position="82"/>
        <end position="102"/>
    </location>
</feature>
<feature type="transmembrane region" description="Helical" evidence="2">
    <location>
        <begin position="109"/>
        <end position="129"/>
    </location>
</feature>
<feature type="transmembrane region" description="Helical" evidence="2">
    <location>
        <begin position="167"/>
        <end position="187"/>
    </location>
</feature>
<feature type="short sequence motif" description="YXXL">
    <location>
        <begin position="52"/>
        <end position="55"/>
    </location>
</feature>
<proteinExistence type="evidence at transcript level"/>